<accession>O55081</accession>
<keyword id="KW-0131">Cell cycle</keyword>
<keyword id="KW-0156">Chromatin regulator</keyword>
<keyword id="KW-0903">Direct protein sequencing</keyword>
<keyword id="KW-0238">DNA-binding</keyword>
<keyword id="KW-0325">Glycoprotein</keyword>
<keyword id="KW-0539">Nucleus</keyword>
<keyword id="KW-0597">Phosphoprotein</keyword>
<keyword id="KW-1185">Reference proteome</keyword>
<keyword id="KW-0678">Repressor</keyword>
<keyword id="KW-0804">Transcription</keyword>
<keyword id="KW-0805">Transcription regulation</keyword>
<keyword id="KW-0043">Tumor suppressor</keyword>
<name>RBL2_RAT</name>
<proteinExistence type="evidence at protein level"/>
<feature type="chain" id="PRO_0000167843" description="Retinoblastoma-like protein 2">
    <location>
        <begin position="1"/>
        <end position="1135"/>
    </location>
</feature>
<feature type="region of interest" description="Disordered" evidence="5">
    <location>
        <begin position="1"/>
        <end position="43"/>
    </location>
</feature>
<feature type="region of interest" description="Pocket; binds E1A">
    <location>
        <begin position="414"/>
        <end position="1021"/>
    </location>
</feature>
<feature type="region of interest" description="Domain A">
    <location>
        <begin position="414"/>
        <end position="613"/>
    </location>
</feature>
<feature type="region of interest" description="Spacer">
    <location>
        <begin position="614"/>
        <end position="824"/>
    </location>
</feature>
<feature type="region of interest" description="Disordered" evidence="5">
    <location>
        <begin position="649"/>
        <end position="698"/>
    </location>
</feature>
<feature type="region of interest" description="Disordered" evidence="5">
    <location>
        <begin position="806"/>
        <end position="825"/>
    </location>
</feature>
<feature type="region of interest" description="Domain B">
    <location>
        <begin position="825"/>
        <end position="1021"/>
    </location>
</feature>
<feature type="region of interest" description="Disordered" evidence="5">
    <location>
        <begin position="932"/>
        <end position="995"/>
    </location>
</feature>
<feature type="compositionally biased region" description="Polar residues" evidence="5">
    <location>
        <begin position="656"/>
        <end position="674"/>
    </location>
</feature>
<feature type="compositionally biased region" description="Low complexity" evidence="5">
    <location>
        <begin position="806"/>
        <end position="818"/>
    </location>
</feature>
<feature type="compositionally biased region" description="Polar residues" evidence="5">
    <location>
        <begin position="935"/>
        <end position="950"/>
    </location>
</feature>
<feature type="compositionally biased region" description="Polar residues" evidence="5">
    <location>
        <begin position="958"/>
        <end position="969"/>
    </location>
</feature>
<feature type="compositionally biased region" description="Pro residues" evidence="5">
    <location>
        <begin position="971"/>
        <end position="981"/>
    </location>
</feature>
<feature type="modified residue" description="Phosphoserine" evidence="3">
    <location>
        <position position="410"/>
    </location>
</feature>
<feature type="modified residue" description="Phosphothreonine" evidence="4">
    <location>
        <position position="414"/>
    </location>
</feature>
<feature type="modified residue" description="Phosphoserine" evidence="8">
    <location>
        <position position="636"/>
    </location>
</feature>
<feature type="modified residue" description="Phosphothreonine" evidence="8">
    <location>
        <position position="639"/>
    </location>
</feature>
<feature type="modified residue" description="Phosphoserine" evidence="3">
    <location>
        <position position="659"/>
    </location>
</feature>
<feature type="modified residue" description="Phosphoserine" evidence="3">
    <location>
        <position position="669"/>
    </location>
</feature>
<feature type="modified residue" description="Phosphoserine" evidence="3">
    <location>
        <position position="684"/>
    </location>
</feature>
<feature type="modified residue" description="Phosphoserine" evidence="4">
    <location>
        <position position="942"/>
    </location>
</feature>
<feature type="modified residue" description="Phosphoserine" evidence="8">
    <location>
        <position position="946"/>
    </location>
</feature>
<feature type="modified residue" description="Phosphoserine" evidence="3">
    <location>
        <position position="960"/>
    </location>
</feature>
<feature type="modified residue" description="Phosphoserine" evidence="3">
    <location>
        <position position="965"/>
    </location>
</feature>
<feature type="modified residue" description="Phosphoserine" evidence="3">
    <location>
        <position position="967"/>
    </location>
</feature>
<feature type="modified residue" description="Phosphothreonine" evidence="3">
    <location>
        <position position="968"/>
    </location>
</feature>
<feature type="modified residue" description="Phosphoserine" evidence="3">
    <location>
        <position position="975"/>
    </location>
</feature>
<feature type="modified residue" description="Phosphoserine" evidence="3">
    <location>
        <position position="976"/>
    </location>
</feature>
<feature type="modified residue" description="Phosphothreonine" evidence="3">
    <location>
        <position position="980"/>
    </location>
</feature>
<feature type="modified residue" description="Phosphoserine" evidence="3">
    <location>
        <position position="1031"/>
    </location>
</feature>
<feature type="modified residue" description="Phosphoserine" evidence="8">
    <location>
        <position position="1064"/>
    </location>
</feature>
<feature type="modified residue" description="Phosphoserine" evidence="3">
    <location>
        <position position="1076"/>
    </location>
</feature>
<feature type="modified residue" description="Phosphoserine" evidence="8">
    <location>
        <position position="1108"/>
    </location>
</feature>
<feature type="glycosylation site" description="O-linked (GlcNAc) serine" evidence="3">
    <location>
        <position position="417"/>
    </location>
</feature>
<evidence type="ECO:0000250" key="1"/>
<evidence type="ECO:0000250" key="2">
    <source>
        <dbReference type="UniProtKB" id="P67775"/>
    </source>
</evidence>
<evidence type="ECO:0000250" key="3">
    <source>
        <dbReference type="UniProtKB" id="Q08999"/>
    </source>
</evidence>
<evidence type="ECO:0000250" key="4">
    <source>
        <dbReference type="UniProtKB" id="Q64700"/>
    </source>
</evidence>
<evidence type="ECO:0000256" key="5">
    <source>
        <dbReference type="SAM" id="MobiDB-lite"/>
    </source>
</evidence>
<evidence type="ECO:0000269" key="6">
    <source>
    </source>
</evidence>
<evidence type="ECO:0000305" key="7"/>
<evidence type="ECO:0007744" key="8">
    <source>
    </source>
</evidence>
<reference key="1">
    <citation type="journal article" date="1997" name="Biochim. Biophys. Acta">
        <title>Cloning and characterization of the rat p130, a member of the retinoblastoma gene family.</title>
        <authorList>
            <person name="Sawada Y."/>
            <person name="Nomura H."/>
            <person name="Endo Y."/>
            <person name="Umeki K."/>
            <person name="Fujita T."/>
            <person name="Ohtaki S."/>
            <person name="Fujinaga K."/>
        </authorList>
    </citation>
    <scope>NUCLEOTIDE SEQUENCE [MRNA]</scope>
    <source>
        <strain>Sprague-Dawley</strain>
        <tissue>Spleen</tissue>
    </source>
</reference>
<reference key="2">
    <citation type="journal article" date="2002" name="Proc. Natl. Acad. Sci. U.S.A.">
        <title>Identification of a transcriptionally active peroxisome proliferator-activated receptor alpha-interacting cofactor complex in rat liver and characterization of PRIC285 as a coactivator.</title>
        <authorList>
            <person name="Surapureddi S."/>
            <person name="Yu S."/>
            <person name="Bu H."/>
            <person name="Hashimoto T."/>
            <person name="Yeldandi A.V."/>
            <person name="Kashireddy P."/>
            <person name="Cherkaoui-Malki M."/>
            <person name="Qi C."/>
            <person name="Zhu Y.-J."/>
            <person name="Rao M.S."/>
            <person name="Reddy J.K."/>
        </authorList>
    </citation>
    <scope>PROTEIN SEQUENCE OF 276-288 AND 829-838</scope>
    <scope>SUBUNIT</scope>
    <source>
        <tissue>Liver</tissue>
    </source>
</reference>
<reference key="3">
    <citation type="journal article" date="1998" name="Nat. Genet.">
        <title>A retinoblastoma-binding protein that affects cell-cycle control and confers transforming ability.</title>
        <authorList>
            <person name="Woitach J.T."/>
            <person name="Zhang M."/>
            <person name="Niu C.-H."/>
            <person name="Thorgeirsson S.S."/>
        </authorList>
    </citation>
    <scope>INTERACTION WITH RBBP9</scope>
</reference>
<reference key="4">
    <citation type="journal article" date="2012" name="Nat. Commun.">
        <title>Quantitative maps of protein phosphorylation sites across 14 different rat organs and tissues.</title>
        <authorList>
            <person name="Lundby A."/>
            <person name="Secher A."/>
            <person name="Lage K."/>
            <person name="Nordsborg N.B."/>
            <person name="Dmytriyev A."/>
            <person name="Lundby C."/>
            <person name="Olsen J.V."/>
        </authorList>
    </citation>
    <scope>PHOSPHORYLATION [LARGE SCALE ANALYSIS] AT SER-636; THR-639; SER-946; SER-1064 AND SER-1108</scope>
    <scope>IDENTIFICATION BY MASS SPECTROMETRY [LARGE SCALE ANALYSIS]</scope>
</reference>
<protein>
    <recommendedName>
        <fullName>Retinoblastoma-like protein 2</fullName>
    </recommendedName>
    <alternativeName>
        <fullName>130 kDa retinoblastoma-associated protein</fullName>
        <shortName>p130</shortName>
    </alternativeName>
    <alternativeName>
        <fullName>PPAR-alpha-interacting complex protein 128</fullName>
        <shortName>PRIC128</shortName>
    </alternativeName>
    <alternativeName>
        <fullName>Retinoblastoma-related protein 2</fullName>
        <shortName>RBR-2</shortName>
    </alternativeName>
    <alternativeName>
        <fullName>pRb2</fullName>
    </alternativeName>
</protein>
<organism>
    <name type="scientific">Rattus norvegicus</name>
    <name type="common">Rat</name>
    <dbReference type="NCBI Taxonomy" id="10116"/>
    <lineage>
        <taxon>Eukaryota</taxon>
        <taxon>Metazoa</taxon>
        <taxon>Chordata</taxon>
        <taxon>Craniata</taxon>
        <taxon>Vertebrata</taxon>
        <taxon>Euteleostomi</taxon>
        <taxon>Mammalia</taxon>
        <taxon>Eutheria</taxon>
        <taxon>Euarchontoglires</taxon>
        <taxon>Glires</taxon>
        <taxon>Rodentia</taxon>
        <taxon>Myomorpha</taxon>
        <taxon>Muroidea</taxon>
        <taxon>Muridae</taxon>
        <taxon>Murinae</taxon>
        <taxon>Rattus</taxon>
    </lineage>
</organism>
<comment type="function">
    <text evidence="1">Key regulator of entry into cell division. Directly involved in heterochromatin formation by maintaining overall chromatin structure and, in particular, that of constitutive heterochromatin by stabilizing histone methylation. Recruits and targets histone methyltransferases KMT5B and KMT5C, leading to epigenetic transcriptional repression. Controls histone H4 'Lys-20' trimethylation. Probably acts as a transcription repressor by recruiting chromatin-modifying enzymes to promoters. Potent inhibitor of E2F-mediated trans-activation, associates preferentially with E2F5. Binds to cyclins A and E. Binds to and may be involved in the transforming capacity of the adenovirus E1A protein. May act as a tumor suppressor (By similarity).</text>
</comment>
<comment type="subunit">
    <text evidence="2 3 6">Interacts with AATF, KMT5B and KMT5C. Component of the DREAM complex (also named LINC complex) at least composed of E2F4, E2F5, LIN9, LIN37, LIN52, LIN54, MYBL1, MYBL2, RBL1, RBL2, RBBP4, TFDP1 and TFDP2. The complex exists in quiescent cells where it represses cell cycle-dependent genes. It dissociates in S phase when LIN9, LIN37, LIN52 and LIN54 form a subcomplex that binds to MYBL2. Interacts with USP4 (By similarity). Part of the peroxisome proliferator activated receptor alpha (PPAR-alpha) interacting complex (PRIC). Interacts with RINT1 (By similarity). Interacts with PML (By similarity). Interacts with RBBP9 (PubMed:9697699). Interacts with CD53 (By similarity).</text>
</comment>
<comment type="subcellular location">
    <subcellularLocation>
        <location>Nucleus</location>
    </subcellularLocation>
</comment>
<comment type="PTM">
    <text evidence="1">During G0 and early G1 phase of the cell cycle, phosphorylated on Ser-636 and on 5 sites within the domain B. Phosphorylation on Ser-669 in G1 leads to its ubiquitin-dependent proteolysis (By similarity).</text>
</comment>
<comment type="similarity">
    <text evidence="7">Belongs to the retinoblastoma protein (RB) family.</text>
</comment>
<sequence>MASGGNQSSPPPPAAAASSEEEEEDGDTADRAQPAGSPSHQIQQRFEELCSRLNMDEAARAEAWSSYRSMSESYTLEGNDLHWLACALYVACRKSVPTVSKGTAEGNYVSLTRILRCSEQSLIEFFNKMKKWEDMANLPPHFRERTERLERNFTVSAVIFKKYEPIFQDIFKYPQEEQPRQQRGRKQRRQPCTTSEIFHFCWVLFIYAKGNFPMISDDLVNSYHLLLCALDLVYGNALQCSNRKELVNPNFKGVSEDGHPRDSHPSSDPPCVIEKLCSLHDGLVLEAKGIKQHFWKPYIRKLFEKKLLRGKEENLTGFLEPGNFAESFKAVNKAYEEYVLATGSLDERIFLGEDAEEEVGTFSRCVSAASGTESAERTQMRDILQQHLDKSKTLRVCNPLTGVRYVQENSPCVTPVSTATHSLNRLHTMLAGLRNAPSEKLEQILRSCSRDPTRAIADRLREMYEIYSQHFQPDENVSNCAKEMANKHFRFAEMLYYKVLESVIEQEQKRLGDMDLSGVLEQDAFHKSLLACCLEVVAFSYKPPGNFPFIAEIFDVPHYHFYKVIEVFIRAEDGLCREVVKHLNQIEEQILDHLAWKTKSPLWDRIRDNENRVPTCEEVTPPHNLERTDEIYIAGSPLTPRRVGEVRTDAGGLGRSVTSPTTLYDRYSSPTVSTTRRRLFESDSPSEGSTAGRIPPQPLVNAVPVQNVSGETVSVTPVPGQTLVTMATATVTANNGQTVTIPVQGIANENGGITFFPVQVNVGGQAQAVTGSIQPLSAQALAGSLSSQQVTGTTLQVPGPVAIQQISPGGQQQNQGQPLTSSSIRPRKTSSLSLFFRKVYYLAGVRLRDLCTKLDISDELRKKIWTCFEFSIVQCPELMMDRHLDQLLMCAIYVMAKVTKEDKSFQNIMRCYRTQPQARSQVYRSVLIKGKRRNSGSCENRSHQNSPTELNTDRASRDSSPVMRSNSTLPVPQPSSAPPTPTRLTGANSDIEEEERGDLIQFYNNIYRKQIQTFAMKYSQANSQMDTPPLSPYPFVRTGSPRRVQLSQSHPIYISPHKNEAMLSPREKIFYYFSNSPSKRLREINSMIRTGETPTKKRGILLDDGSESPAKRICPENHSALLRRLQDVANDRGSH</sequence>
<dbReference type="EMBL" id="D55627">
    <property type="protein sequence ID" value="BAA24196.1"/>
    <property type="molecule type" value="mRNA"/>
</dbReference>
<dbReference type="RefSeq" id="NP_112356.1">
    <property type="nucleotide sequence ID" value="NM_031094.1"/>
</dbReference>
<dbReference type="SMR" id="O55081"/>
<dbReference type="BioGRID" id="249630">
    <property type="interactions" value="5"/>
</dbReference>
<dbReference type="FunCoup" id="O55081">
    <property type="interactions" value="3172"/>
</dbReference>
<dbReference type="IntAct" id="O55081">
    <property type="interactions" value="1"/>
</dbReference>
<dbReference type="STRING" id="10116.ENSRNOP00000017361"/>
<dbReference type="GlyGen" id="O55081">
    <property type="glycosylation" value="2 sites"/>
</dbReference>
<dbReference type="iPTMnet" id="O55081"/>
<dbReference type="PhosphoSitePlus" id="O55081"/>
<dbReference type="PaxDb" id="10116-ENSRNOP00000017361"/>
<dbReference type="GeneID" id="81758"/>
<dbReference type="KEGG" id="rno:81758"/>
<dbReference type="AGR" id="RGD:3541"/>
<dbReference type="CTD" id="5934"/>
<dbReference type="RGD" id="3541">
    <property type="gene designation" value="Rbl2"/>
</dbReference>
<dbReference type="eggNOG" id="KOG1010">
    <property type="taxonomic scope" value="Eukaryota"/>
</dbReference>
<dbReference type="InParanoid" id="O55081"/>
<dbReference type="OrthoDB" id="844594at2759"/>
<dbReference type="PhylomeDB" id="O55081"/>
<dbReference type="Reactome" id="R-RNO-1538133">
    <property type="pathway name" value="G0 and Early G1"/>
</dbReference>
<dbReference type="Reactome" id="R-RNO-69231">
    <property type="pathway name" value="Cyclin D associated events in G1"/>
</dbReference>
<dbReference type="PRO" id="PR:O55081"/>
<dbReference type="Proteomes" id="UP000002494">
    <property type="component" value="Unplaced"/>
</dbReference>
<dbReference type="GO" id="GO:0000785">
    <property type="term" value="C:chromatin"/>
    <property type="evidence" value="ECO:0000314"/>
    <property type="project" value="RGD"/>
</dbReference>
<dbReference type="GO" id="GO:0005634">
    <property type="term" value="C:nucleus"/>
    <property type="evidence" value="ECO:0000266"/>
    <property type="project" value="RGD"/>
</dbReference>
<dbReference type="GO" id="GO:0005667">
    <property type="term" value="C:transcription regulator complex"/>
    <property type="evidence" value="ECO:0000266"/>
    <property type="project" value="RGD"/>
</dbReference>
<dbReference type="GO" id="GO:1990841">
    <property type="term" value="F:promoter-specific chromatin binding"/>
    <property type="evidence" value="ECO:0000266"/>
    <property type="project" value="RGD"/>
</dbReference>
<dbReference type="GO" id="GO:0000977">
    <property type="term" value="F:RNA polymerase II transcription regulatory region sequence-specific DNA binding"/>
    <property type="evidence" value="ECO:0000318"/>
    <property type="project" value="GO_Central"/>
</dbReference>
<dbReference type="GO" id="GO:0030154">
    <property type="term" value="P:cell differentiation"/>
    <property type="evidence" value="ECO:0000318"/>
    <property type="project" value="GO_Central"/>
</dbReference>
<dbReference type="GO" id="GO:0006325">
    <property type="term" value="P:chromatin organization"/>
    <property type="evidence" value="ECO:0007669"/>
    <property type="project" value="UniProtKB-KW"/>
</dbReference>
<dbReference type="GO" id="GO:2000134">
    <property type="term" value="P:negative regulation of G1/S transition of mitotic cell cycle"/>
    <property type="evidence" value="ECO:0000318"/>
    <property type="project" value="GO_Central"/>
</dbReference>
<dbReference type="GO" id="GO:0010629">
    <property type="term" value="P:negative regulation of gene expression"/>
    <property type="evidence" value="ECO:0000266"/>
    <property type="project" value="RGD"/>
</dbReference>
<dbReference type="GO" id="GO:0006357">
    <property type="term" value="P:regulation of transcription by RNA polymerase II"/>
    <property type="evidence" value="ECO:0007669"/>
    <property type="project" value="InterPro"/>
</dbReference>
<dbReference type="CDD" id="cd20606">
    <property type="entry name" value="CYCLIN_RBL2"/>
    <property type="match status" value="1"/>
</dbReference>
<dbReference type="CDD" id="cd00043">
    <property type="entry name" value="CYCLIN_SF"/>
    <property type="match status" value="1"/>
</dbReference>
<dbReference type="FunFam" id="1.10.472.10:FF:000048">
    <property type="entry name" value="Retinoblastoma-like 2, isoform CRA_a"/>
    <property type="match status" value="1"/>
</dbReference>
<dbReference type="FunFam" id="1.10.472.10:FF:000049">
    <property type="entry name" value="Retinoblastoma-like 2, isoform CRA_a"/>
    <property type="match status" value="1"/>
</dbReference>
<dbReference type="FunFam" id="1.10.472.140:FF:000001">
    <property type="entry name" value="Retinoblastoma-like 2, isoform CRA_a"/>
    <property type="match status" value="1"/>
</dbReference>
<dbReference type="Gene3D" id="1.10.472.140">
    <property type="match status" value="1"/>
</dbReference>
<dbReference type="Gene3D" id="1.10.472.10">
    <property type="entry name" value="Cyclin-like"/>
    <property type="match status" value="3"/>
</dbReference>
<dbReference type="InterPro" id="IPR013763">
    <property type="entry name" value="Cyclin-like_dom"/>
</dbReference>
<dbReference type="InterPro" id="IPR036915">
    <property type="entry name" value="Cyclin-like_sf"/>
</dbReference>
<dbReference type="InterPro" id="IPR002720">
    <property type="entry name" value="RB_A"/>
</dbReference>
<dbReference type="InterPro" id="IPR002719">
    <property type="entry name" value="RB_B"/>
</dbReference>
<dbReference type="InterPro" id="IPR015030">
    <property type="entry name" value="RB_C"/>
</dbReference>
<dbReference type="InterPro" id="IPR028309">
    <property type="entry name" value="RB_fam"/>
</dbReference>
<dbReference type="InterPro" id="IPR024599">
    <property type="entry name" value="RB_N"/>
</dbReference>
<dbReference type="PANTHER" id="PTHR13742">
    <property type="entry name" value="RETINOBLASTOMA-ASSOCIATED PROTEIN RB -RELATED"/>
    <property type="match status" value="1"/>
</dbReference>
<dbReference type="PANTHER" id="PTHR13742:SF8">
    <property type="entry name" value="RETINOBLASTOMA-LIKE PROTEIN 2"/>
    <property type="match status" value="1"/>
</dbReference>
<dbReference type="Pfam" id="PF11934">
    <property type="entry name" value="DUF3452"/>
    <property type="match status" value="1"/>
</dbReference>
<dbReference type="Pfam" id="PF01858">
    <property type="entry name" value="RB_A"/>
    <property type="match status" value="1"/>
</dbReference>
<dbReference type="Pfam" id="PF01857">
    <property type="entry name" value="RB_B"/>
    <property type="match status" value="1"/>
</dbReference>
<dbReference type="SMART" id="SM00385">
    <property type="entry name" value="CYCLIN"/>
    <property type="match status" value="2"/>
</dbReference>
<dbReference type="SMART" id="SM01367">
    <property type="entry name" value="DUF3452"/>
    <property type="match status" value="1"/>
</dbReference>
<dbReference type="SMART" id="SM01368">
    <property type="entry name" value="RB_A"/>
    <property type="match status" value="1"/>
</dbReference>
<dbReference type="SMART" id="SM01369">
    <property type="entry name" value="Rb_C"/>
    <property type="match status" value="1"/>
</dbReference>
<dbReference type="SUPFAM" id="SSF47954">
    <property type="entry name" value="Cyclin-like"/>
    <property type="match status" value="3"/>
</dbReference>
<gene>
    <name type="primary">Rbl2</name>
</gene>